<proteinExistence type="inferred from homology"/>
<protein>
    <recommendedName>
        <fullName evidence="1">Ribosome maturation factor RimM</fullName>
    </recommendedName>
</protein>
<reference key="1">
    <citation type="submission" date="2007-11" db="EMBL/GenBank/DDBJ databases">
        <title>Complete sequence of chromosome of Shewanella baltica OS195.</title>
        <authorList>
            <consortium name="US DOE Joint Genome Institute"/>
            <person name="Copeland A."/>
            <person name="Lucas S."/>
            <person name="Lapidus A."/>
            <person name="Barry K."/>
            <person name="Glavina del Rio T."/>
            <person name="Dalin E."/>
            <person name="Tice H."/>
            <person name="Pitluck S."/>
            <person name="Chain P."/>
            <person name="Malfatti S."/>
            <person name="Shin M."/>
            <person name="Vergez L."/>
            <person name="Schmutz J."/>
            <person name="Larimer F."/>
            <person name="Land M."/>
            <person name="Hauser L."/>
            <person name="Kyrpides N."/>
            <person name="Kim E."/>
            <person name="Brettar I."/>
            <person name="Rodrigues J."/>
            <person name="Konstantinidis K."/>
            <person name="Klappenbach J."/>
            <person name="Hofle M."/>
            <person name="Tiedje J."/>
            <person name="Richardson P."/>
        </authorList>
    </citation>
    <scope>NUCLEOTIDE SEQUENCE [LARGE SCALE GENOMIC DNA]</scope>
    <source>
        <strain>OS195</strain>
    </source>
</reference>
<sequence>MSSNQQPVVLGKLGSCHGIKGWLKITAYTDSVEGIFDYSPWLIKENGEWREIKVTQWRYQGKAVVALLDGVETREQAQMLTNCEIAILPEQMNDLPADEFYWRDLIGCEVVNTTGYNMGIVDQIVETGSNDVLLVKANAKDSFGKVERMIPFVPEQFIKTVDLQGKQILVDWDPDF</sequence>
<feature type="chain" id="PRO_1000074040" description="Ribosome maturation factor RimM">
    <location>
        <begin position="1"/>
        <end position="176"/>
    </location>
</feature>
<feature type="domain" description="PRC barrel" evidence="1">
    <location>
        <begin position="97"/>
        <end position="176"/>
    </location>
</feature>
<evidence type="ECO:0000255" key="1">
    <source>
        <dbReference type="HAMAP-Rule" id="MF_00014"/>
    </source>
</evidence>
<accession>A9L5P6</accession>
<gene>
    <name evidence="1" type="primary">rimM</name>
    <name type="ordered locus">Sbal195_1288</name>
</gene>
<comment type="function">
    <text evidence="1">An accessory protein needed during the final step in the assembly of 30S ribosomal subunit, possibly for assembly of the head region. Essential for efficient processing of 16S rRNA. May be needed both before and after RbfA during the maturation of 16S rRNA. It has affinity for free ribosomal 30S subunits but not for 70S ribosomes.</text>
</comment>
<comment type="subunit">
    <text evidence="1">Binds ribosomal protein uS19.</text>
</comment>
<comment type="subcellular location">
    <subcellularLocation>
        <location evidence="1">Cytoplasm</location>
    </subcellularLocation>
</comment>
<comment type="domain">
    <text evidence="1">The PRC barrel domain binds ribosomal protein uS19.</text>
</comment>
<comment type="similarity">
    <text evidence="1">Belongs to the RimM family.</text>
</comment>
<dbReference type="EMBL" id="CP000891">
    <property type="protein sequence ID" value="ABX48463.1"/>
    <property type="molecule type" value="Genomic_DNA"/>
</dbReference>
<dbReference type="RefSeq" id="WP_006080789.1">
    <property type="nucleotide sequence ID" value="NC_009997.1"/>
</dbReference>
<dbReference type="SMR" id="A9L5P6"/>
<dbReference type="GeneID" id="11771556"/>
<dbReference type="KEGG" id="sbn:Sbal195_1288"/>
<dbReference type="HOGENOM" id="CLU_077636_1_0_6"/>
<dbReference type="Proteomes" id="UP000000770">
    <property type="component" value="Chromosome"/>
</dbReference>
<dbReference type="GO" id="GO:0005737">
    <property type="term" value="C:cytoplasm"/>
    <property type="evidence" value="ECO:0007669"/>
    <property type="project" value="UniProtKB-SubCell"/>
</dbReference>
<dbReference type="GO" id="GO:0005840">
    <property type="term" value="C:ribosome"/>
    <property type="evidence" value="ECO:0007669"/>
    <property type="project" value="InterPro"/>
</dbReference>
<dbReference type="GO" id="GO:0043022">
    <property type="term" value="F:ribosome binding"/>
    <property type="evidence" value="ECO:0007669"/>
    <property type="project" value="InterPro"/>
</dbReference>
<dbReference type="GO" id="GO:0042274">
    <property type="term" value="P:ribosomal small subunit biogenesis"/>
    <property type="evidence" value="ECO:0007669"/>
    <property type="project" value="UniProtKB-UniRule"/>
</dbReference>
<dbReference type="GO" id="GO:0006364">
    <property type="term" value="P:rRNA processing"/>
    <property type="evidence" value="ECO:0007669"/>
    <property type="project" value="UniProtKB-UniRule"/>
</dbReference>
<dbReference type="Gene3D" id="2.30.30.240">
    <property type="entry name" value="PRC-barrel domain"/>
    <property type="match status" value="1"/>
</dbReference>
<dbReference type="Gene3D" id="2.40.30.60">
    <property type="entry name" value="RimM"/>
    <property type="match status" value="1"/>
</dbReference>
<dbReference type="HAMAP" id="MF_00014">
    <property type="entry name" value="Ribosome_mat_RimM"/>
    <property type="match status" value="1"/>
</dbReference>
<dbReference type="InterPro" id="IPR011033">
    <property type="entry name" value="PRC_barrel-like_sf"/>
</dbReference>
<dbReference type="InterPro" id="IPR056792">
    <property type="entry name" value="PRC_RimM"/>
</dbReference>
<dbReference type="InterPro" id="IPR011961">
    <property type="entry name" value="RimM"/>
</dbReference>
<dbReference type="InterPro" id="IPR002676">
    <property type="entry name" value="RimM_N"/>
</dbReference>
<dbReference type="InterPro" id="IPR036976">
    <property type="entry name" value="RimM_N_sf"/>
</dbReference>
<dbReference type="InterPro" id="IPR009000">
    <property type="entry name" value="Transl_B-barrel_sf"/>
</dbReference>
<dbReference type="NCBIfam" id="TIGR02273">
    <property type="entry name" value="16S_RimM"/>
    <property type="match status" value="1"/>
</dbReference>
<dbReference type="PANTHER" id="PTHR33692">
    <property type="entry name" value="RIBOSOME MATURATION FACTOR RIMM"/>
    <property type="match status" value="1"/>
</dbReference>
<dbReference type="PANTHER" id="PTHR33692:SF1">
    <property type="entry name" value="RIBOSOME MATURATION FACTOR RIMM"/>
    <property type="match status" value="1"/>
</dbReference>
<dbReference type="Pfam" id="PF24986">
    <property type="entry name" value="PRC_RimM"/>
    <property type="match status" value="1"/>
</dbReference>
<dbReference type="Pfam" id="PF01782">
    <property type="entry name" value="RimM"/>
    <property type="match status" value="1"/>
</dbReference>
<dbReference type="SUPFAM" id="SSF50346">
    <property type="entry name" value="PRC-barrel domain"/>
    <property type="match status" value="1"/>
</dbReference>
<dbReference type="SUPFAM" id="SSF50447">
    <property type="entry name" value="Translation proteins"/>
    <property type="match status" value="1"/>
</dbReference>
<keyword id="KW-0143">Chaperone</keyword>
<keyword id="KW-0963">Cytoplasm</keyword>
<keyword id="KW-0690">Ribosome biogenesis</keyword>
<keyword id="KW-0698">rRNA processing</keyword>
<organism>
    <name type="scientific">Shewanella baltica (strain OS195)</name>
    <dbReference type="NCBI Taxonomy" id="399599"/>
    <lineage>
        <taxon>Bacteria</taxon>
        <taxon>Pseudomonadati</taxon>
        <taxon>Pseudomonadota</taxon>
        <taxon>Gammaproteobacteria</taxon>
        <taxon>Alteromonadales</taxon>
        <taxon>Shewanellaceae</taxon>
        <taxon>Shewanella</taxon>
    </lineage>
</organism>
<name>RIMM_SHEB9</name>